<feature type="chain" id="PRO_0000095388" description="Tyrosine recombinase XerD">
    <location>
        <begin position="1"/>
        <end position="298"/>
    </location>
</feature>
<feature type="domain" description="Core-binding (CB)" evidence="3">
    <location>
        <begin position="2"/>
        <end position="87"/>
    </location>
</feature>
<feature type="domain" description="Tyr recombinase" evidence="2">
    <location>
        <begin position="108"/>
        <end position="292"/>
    </location>
</feature>
<feature type="active site" evidence="1">
    <location>
        <position position="148"/>
    </location>
</feature>
<feature type="active site" evidence="1">
    <location>
        <position position="172"/>
    </location>
</feature>
<feature type="active site" evidence="1">
    <location>
        <position position="244"/>
    </location>
</feature>
<feature type="active site" evidence="1">
    <location>
        <position position="247"/>
    </location>
</feature>
<feature type="active site" evidence="1">
    <location>
        <position position="270"/>
    </location>
</feature>
<feature type="active site" description="O-(3'-phospho-DNA)-tyrosine intermediate" evidence="1">
    <location>
        <position position="279"/>
    </location>
</feature>
<organism>
    <name type="scientific">Escherichia coli O157:H7</name>
    <dbReference type="NCBI Taxonomy" id="83334"/>
    <lineage>
        <taxon>Bacteria</taxon>
        <taxon>Pseudomonadati</taxon>
        <taxon>Pseudomonadota</taxon>
        <taxon>Gammaproteobacteria</taxon>
        <taxon>Enterobacterales</taxon>
        <taxon>Enterobacteriaceae</taxon>
        <taxon>Escherichia</taxon>
    </lineage>
</organism>
<protein>
    <recommendedName>
        <fullName evidence="1">Tyrosine recombinase XerD</fullName>
    </recommendedName>
</protein>
<proteinExistence type="inferred from homology"/>
<evidence type="ECO:0000255" key="1">
    <source>
        <dbReference type="HAMAP-Rule" id="MF_01807"/>
    </source>
</evidence>
<evidence type="ECO:0000255" key="2">
    <source>
        <dbReference type="PROSITE-ProRule" id="PRU01246"/>
    </source>
</evidence>
<evidence type="ECO:0000255" key="3">
    <source>
        <dbReference type="PROSITE-ProRule" id="PRU01248"/>
    </source>
</evidence>
<name>XERD_ECO57</name>
<accession>Q8X574</accession>
<reference key="1">
    <citation type="journal article" date="2001" name="Nature">
        <title>Genome sequence of enterohaemorrhagic Escherichia coli O157:H7.</title>
        <authorList>
            <person name="Perna N.T."/>
            <person name="Plunkett G. III"/>
            <person name="Burland V."/>
            <person name="Mau B."/>
            <person name="Glasner J.D."/>
            <person name="Rose D.J."/>
            <person name="Mayhew G.F."/>
            <person name="Evans P.S."/>
            <person name="Gregor J."/>
            <person name="Kirkpatrick H.A."/>
            <person name="Posfai G."/>
            <person name="Hackett J."/>
            <person name="Klink S."/>
            <person name="Boutin A."/>
            <person name="Shao Y."/>
            <person name="Miller L."/>
            <person name="Grotbeck E.J."/>
            <person name="Davis N.W."/>
            <person name="Lim A."/>
            <person name="Dimalanta E.T."/>
            <person name="Potamousis K."/>
            <person name="Apodaca J."/>
            <person name="Anantharaman T.S."/>
            <person name="Lin J."/>
            <person name="Yen G."/>
            <person name="Schwartz D.C."/>
            <person name="Welch R.A."/>
            <person name="Blattner F.R."/>
        </authorList>
    </citation>
    <scope>NUCLEOTIDE SEQUENCE [LARGE SCALE GENOMIC DNA]</scope>
    <source>
        <strain>O157:H7 / EDL933 / ATCC 700927 / EHEC</strain>
    </source>
</reference>
<reference key="2">
    <citation type="journal article" date="2001" name="DNA Res.">
        <title>Complete genome sequence of enterohemorrhagic Escherichia coli O157:H7 and genomic comparison with a laboratory strain K-12.</title>
        <authorList>
            <person name="Hayashi T."/>
            <person name="Makino K."/>
            <person name="Ohnishi M."/>
            <person name="Kurokawa K."/>
            <person name="Ishii K."/>
            <person name="Yokoyama K."/>
            <person name="Han C.-G."/>
            <person name="Ohtsubo E."/>
            <person name="Nakayama K."/>
            <person name="Murata T."/>
            <person name="Tanaka M."/>
            <person name="Tobe T."/>
            <person name="Iida T."/>
            <person name="Takami H."/>
            <person name="Honda T."/>
            <person name="Sasakawa C."/>
            <person name="Ogasawara N."/>
            <person name="Yasunaga T."/>
            <person name="Kuhara S."/>
            <person name="Shiba T."/>
            <person name="Hattori M."/>
            <person name="Shinagawa H."/>
        </authorList>
    </citation>
    <scope>NUCLEOTIDE SEQUENCE [LARGE SCALE GENOMIC DNA]</scope>
    <source>
        <strain>O157:H7 / Sakai / RIMD 0509952 / EHEC</strain>
    </source>
</reference>
<keyword id="KW-0131">Cell cycle</keyword>
<keyword id="KW-0132">Cell division</keyword>
<keyword id="KW-0159">Chromosome partition</keyword>
<keyword id="KW-0963">Cytoplasm</keyword>
<keyword id="KW-0229">DNA integration</keyword>
<keyword id="KW-0233">DNA recombination</keyword>
<keyword id="KW-0238">DNA-binding</keyword>
<keyword id="KW-1185">Reference proteome</keyword>
<dbReference type="EMBL" id="AE005174">
    <property type="protein sequence ID" value="AAG58022.1"/>
    <property type="molecule type" value="Genomic_DNA"/>
</dbReference>
<dbReference type="EMBL" id="BA000007">
    <property type="protein sequence ID" value="BAB37189.1"/>
    <property type="molecule type" value="Genomic_DNA"/>
</dbReference>
<dbReference type="PIR" id="B85945">
    <property type="entry name" value="B85945"/>
</dbReference>
<dbReference type="PIR" id="F91099">
    <property type="entry name" value="F91099"/>
</dbReference>
<dbReference type="RefSeq" id="NP_311793.1">
    <property type="nucleotide sequence ID" value="NC_002695.1"/>
</dbReference>
<dbReference type="RefSeq" id="WP_000806640.1">
    <property type="nucleotide sequence ID" value="NZ_SDVX01000004.1"/>
</dbReference>
<dbReference type="SMR" id="Q8X574"/>
<dbReference type="STRING" id="155864.Z4232"/>
<dbReference type="GeneID" id="912431"/>
<dbReference type="KEGG" id="ece:Z4232"/>
<dbReference type="KEGG" id="ecs:ECs_3766"/>
<dbReference type="PATRIC" id="fig|386585.9.peg.3930"/>
<dbReference type="eggNOG" id="COG4974">
    <property type="taxonomic scope" value="Bacteria"/>
</dbReference>
<dbReference type="HOGENOM" id="CLU_027562_9_0_6"/>
<dbReference type="Proteomes" id="UP000000558">
    <property type="component" value="Chromosome"/>
</dbReference>
<dbReference type="Proteomes" id="UP000002519">
    <property type="component" value="Chromosome"/>
</dbReference>
<dbReference type="GO" id="GO:0005737">
    <property type="term" value="C:cytoplasm"/>
    <property type="evidence" value="ECO:0007669"/>
    <property type="project" value="UniProtKB-SubCell"/>
</dbReference>
<dbReference type="GO" id="GO:0003677">
    <property type="term" value="F:DNA binding"/>
    <property type="evidence" value="ECO:0007669"/>
    <property type="project" value="UniProtKB-KW"/>
</dbReference>
<dbReference type="GO" id="GO:0009037">
    <property type="term" value="F:tyrosine-based site-specific recombinase activity"/>
    <property type="evidence" value="ECO:0007669"/>
    <property type="project" value="UniProtKB-UniRule"/>
</dbReference>
<dbReference type="GO" id="GO:0051301">
    <property type="term" value="P:cell division"/>
    <property type="evidence" value="ECO:0007669"/>
    <property type="project" value="UniProtKB-KW"/>
</dbReference>
<dbReference type="GO" id="GO:0007059">
    <property type="term" value="P:chromosome segregation"/>
    <property type="evidence" value="ECO:0007669"/>
    <property type="project" value="UniProtKB-UniRule"/>
</dbReference>
<dbReference type="GO" id="GO:0006313">
    <property type="term" value="P:DNA transposition"/>
    <property type="evidence" value="ECO:0007669"/>
    <property type="project" value="UniProtKB-UniRule"/>
</dbReference>
<dbReference type="CDD" id="cd00798">
    <property type="entry name" value="INT_XerDC_C"/>
    <property type="match status" value="1"/>
</dbReference>
<dbReference type="FunFam" id="1.10.150.130:FF:000002">
    <property type="entry name" value="Tyrosine recombinase XerD"/>
    <property type="match status" value="1"/>
</dbReference>
<dbReference type="FunFam" id="1.10.443.10:FF:000001">
    <property type="entry name" value="Tyrosine recombinase XerD"/>
    <property type="match status" value="1"/>
</dbReference>
<dbReference type="Gene3D" id="1.10.150.130">
    <property type="match status" value="1"/>
</dbReference>
<dbReference type="Gene3D" id="1.10.443.10">
    <property type="entry name" value="Intergrase catalytic core"/>
    <property type="match status" value="1"/>
</dbReference>
<dbReference type="HAMAP" id="MF_01808">
    <property type="entry name" value="Recomb_XerC_XerD"/>
    <property type="match status" value="1"/>
</dbReference>
<dbReference type="HAMAP" id="MF_01807">
    <property type="entry name" value="Recomb_XerD"/>
    <property type="match status" value="1"/>
</dbReference>
<dbReference type="InterPro" id="IPR044068">
    <property type="entry name" value="CB"/>
</dbReference>
<dbReference type="InterPro" id="IPR011010">
    <property type="entry name" value="DNA_brk_join_enz"/>
</dbReference>
<dbReference type="InterPro" id="IPR013762">
    <property type="entry name" value="Integrase-like_cat_sf"/>
</dbReference>
<dbReference type="InterPro" id="IPR002104">
    <property type="entry name" value="Integrase_catalytic"/>
</dbReference>
<dbReference type="InterPro" id="IPR010998">
    <property type="entry name" value="Integrase_recombinase_N"/>
</dbReference>
<dbReference type="InterPro" id="IPR004107">
    <property type="entry name" value="Integrase_SAM-like_N"/>
</dbReference>
<dbReference type="InterPro" id="IPR011932">
    <property type="entry name" value="Recomb_XerD"/>
</dbReference>
<dbReference type="InterPro" id="IPR023009">
    <property type="entry name" value="Tyrosine_recombinase_XerC/XerD"/>
</dbReference>
<dbReference type="InterPro" id="IPR050090">
    <property type="entry name" value="Tyrosine_recombinase_XerCD"/>
</dbReference>
<dbReference type="NCBIfam" id="NF001399">
    <property type="entry name" value="PRK00283.1"/>
    <property type="match status" value="1"/>
</dbReference>
<dbReference type="NCBIfam" id="NF040815">
    <property type="entry name" value="recomb_XerA_Arch"/>
    <property type="match status" value="1"/>
</dbReference>
<dbReference type="NCBIfam" id="TIGR02225">
    <property type="entry name" value="recomb_XerD"/>
    <property type="match status" value="1"/>
</dbReference>
<dbReference type="PANTHER" id="PTHR30349">
    <property type="entry name" value="PHAGE INTEGRASE-RELATED"/>
    <property type="match status" value="1"/>
</dbReference>
<dbReference type="PANTHER" id="PTHR30349:SF90">
    <property type="entry name" value="TYROSINE RECOMBINASE XERD"/>
    <property type="match status" value="1"/>
</dbReference>
<dbReference type="Pfam" id="PF02899">
    <property type="entry name" value="Phage_int_SAM_1"/>
    <property type="match status" value="1"/>
</dbReference>
<dbReference type="Pfam" id="PF00589">
    <property type="entry name" value="Phage_integrase"/>
    <property type="match status" value="1"/>
</dbReference>
<dbReference type="SUPFAM" id="SSF56349">
    <property type="entry name" value="DNA breaking-rejoining enzymes"/>
    <property type="match status" value="1"/>
</dbReference>
<dbReference type="SUPFAM" id="SSF47823">
    <property type="entry name" value="lambda integrase-like, N-terminal domain"/>
    <property type="match status" value="1"/>
</dbReference>
<dbReference type="PROSITE" id="PS51900">
    <property type="entry name" value="CB"/>
    <property type="match status" value="1"/>
</dbReference>
<dbReference type="PROSITE" id="PS51898">
    <property type="entry name" value="TYR_RECOMBINASE"/>
    <property type="match status" value="1"/>
</dbReference>
<comment type="function">
    <text evidence="1">Site-specific tyrosine recombinase, which acts by catalyzing the cutting and rejoining of the recombining DNA molecules. Binds cooperatively to specific DNA consensus sequences that are separated from XerC binding sites by a short central region, forming the heterotetrameric XerC-XerD complex that recombines DNA substrates. The complex is essential to convert dimers of the bacterial chromosome into monomers to permit their segregation at cell division. It also contributes to the segregational stability of plasmids. In the complex XerD specifically exchanges the bottom DNA strands.</text>
</comment>
<comment type="activity regulation">
    <text evidence="1">FtsK may regulate the catalytic switch between XerC and XerD in the heterotetrameric complex during the two steps of the recombination process.</text>
</comment>
<comment type="subunit">
    <text evidence="1">Forms a cyclic heterotetrameric complex composed of two molecules of XerC and two molecules of XerD, in which XerC interacts with XerD via its C-terminal region, XerD interacts with XerC via its C-terminal region and so on.</text>
</comment>
<comment type="subcellular location">
    <subcellularLocation>
        <location evidence="1">Cytoplasm</location>
    </subcellularLocation>
</comment>
<comment type="similarity">
    <text evidence="1">Belongs to the 'phage' integrase family. XerD subfamily.</text>
</comment>
<sequence>MKQDLARIEQFLDALWLEKNLAENTLNAYRRDLSMMVEWLHHRGLTLATAQSDDLQALLAERLEGGYKATSSARLLSAVRRLFQYLYREKFREDDPSAHLASPKLPQRLPKDLSEAQVERLLQAPLIDQPLELRDKAMLEVLYATGLRVSELVGLTMSDISLRQGVVRVIGKGNKERLVPLGEEAVYWLETYLEHGRPWLLNGVSIDVLFPSQRAQQMTRQTLWHRIKHYAVLAGIDSEKLSPHVLRHAFATHLLNHGADLRVVQMLLGHSDLSTTQIYTHVATERLRQLHQQHHPRA</sequence>
<gene>
    <name evidence="1" type="primary">xerD</name>
    <name type="synonym">xprB</name>
    <name type="ordered locus">Z4232</name>
    <name type="ordered locus">ECs3766</name>
</gene>